<accession>Q8G2K8</accession>
<accession>G0K667</accession>
<comment type="function">
    <text evidence="1">Catalyzes the conversion of dihydroorotate to orotate with quinone as electron acceptor.</text>
</comment>
<comment type="catalytic activity">
    <reaction evidence="1">
        <text>(S)-dihydroorotate + a quinone = orotate + a quinol</text>
        <dbReference type="Rhea" id="RHEA:30187"/>
        <dbReference type="ChEBI" id="CHEBI:24646"/>
        <dbReference type="ChEBI" id="CHEBI:30839"/>
        <dbReference type="ChEBI" id="CHEBI:30864"/>
        <dbReference type="ChEBI" id="CHEBI:132124"/>
        <dbReference type="EC" id="1.3.5.2"/>
    </reaction>
</comment>
<comment type="cofactor">
    <cofactor evidence="1">
        <name>FMN</name>
        <dbReference type="ChEBI" id="CHEBI:58210"/>
    </cofactor>
    <text evidence="1">Binds 1 FMN per subunit.</text>
</comment>
<comment type="pathway">
    <text evidence="1">Pyrimidine metabolism; UMP biosynthesis via de novo pathway; orotate from (S)-dihydroorotate (quinone route): step 1/1.</text>
</comment>
<comment type="subunit">
    <text evidence="1">Monomer.</text>
</comment>
<comment type="subcellular location">
    <subcellularLocation>
        <location evidence="1">Cell membrane</location>
        <topology evidence="1">Peripheral membrane protein</topology>
    </subcellularLocation>
</comment>
<comment type="similarity">
    <text evidence="1">Belongs to the dihydroorotate dehydrogenase family. Type 2 subfamily.</text>
</comment>
<protein>
    <recommendedName>
        <fullName evidence="1">Dihydroorotate dehydrogenase (quinone)</fullName>
        <ecNumber evidence="1">1.3.5.2</ecNumber>
    </recommendedName>
    <alternativeName>
        <fullName evidence="1">DHOdehase</fullName>
        <shortName evidence="1">DHOD</shortName>
        <shortName evidence="1">DHODase</shortName>
    </alternativeName>
    <alternativeName>
        <fullName evidence="1">Dihydroorotate oxidase</fullName>
    </alternativeName>
</protein>
<evidence type="ECO:0000255" key="1">
    <source>
        <dbReference type="HAMAP-Rule" id="MF_00225"/>
    </source>
</evidence>
<reference key="1">
    <citation type="journal article" date="2002" name="Proc. Natl. Acad. Sci. U.S.A.">
        <title>The Brucella suis genome reveals fundamental similarities between animal and plant pathogens and symbionts.</title>
        <authorList>
            <person name="Paulsen I.T."/>
            <person name="Seshadri R."/>
            <person name="Nelson K.E."/>
            <person name="Eisen J.A."/>
            <person name="Heidelberg J.F."/>
            <person name="Read T.D."/>
            <person name="Dodson R.J."/>
            <person name="Umayam L.A."/>
            <person name="Brinkac L.M."/>
            <person name="Beanan M.J."/>
            <person name="Daugherty S.C."/>
            <person name="DeBoy R.T."/>
            <person name="Durkin A.S."/>
            <person name="Kolonay J.F."/>
            <person name="Madupu R."/>
            <person name="Nelson W.C."/>
            <person name="Ayodeji B."/>
            <person name="Kraul M."/>
            <person name="Shetty J."/>
            <person name="Malek J.A."/>
            <person name="Van Aken S.E."/>
            <person name="Riedmuller S."/>
            <person name="Tettelin H."/>
            <person name="Gill S.R."/>
            <person name="White O."/>
            <person name="Salzberg S.L."/>
            <person name="Hoover D.L."/>
            <person name="Lindler L.E."/>
            <person name="Halling S.M."/>
            <person name="Boyle S.M."/>
            <person name="Fraser C.M."/>
        </authorList>
    </citation>
    <scope>NUCLEOTIDE SEQUENCE [LARGE SCALE GENOMIC DNA]</scope>
    <source>
        <strain>1330</strain>
    </source>
</reference>
<reference key="2">
    <citation type="journal article" date="2011" name="J. Bacteriol.">
        <title>Revised genome sequence of Brucella suis 1330.</title>
        <authorList>
            <person name="Tae H."/>
            <person name="Shallom S."/>
            <person name="Settlage R."/>
            <person name="Preston D."/>
            <person name="Adams L.G."/>
            <person name="Garner H.R."/>
        </authorList>
    </citation>
    <scope>NUCLEOTIDE SEQUENCE [LARGE SCALE GENOMIC DNA]</scope>
    <source>
        <strain>1330</strain>
    </source>
</reference>
<feature type="chain" id="PRO_0000244531" description="Dihydroorotate dehydrogenase (quinone)">
    <location>
        <begin position="1"/>
        <end position="364"/>
    </location>
</feature>
<feature type="active site" description="Nucleophile" evidence="1">
    <location>
        <position position="173"/>
    </location>
</feature>
<feature type="binding site" evidence="1">
    <location>
        <begin position="61"/>
        <end position="65"/>
    </location>
    <ligand>
        <name>FMN</name>
        <dbReference type="ChEBI" id="CHEBI:58210"/>
    </ligand>
</feature>
<feature type="binding site" evidence="1">
    <location>
        <position position="65"/>
    </location>
    <ligand>
        <name>substrate</name>
    </ligand>
</feature>
<feature type="binding site" evidence="1">
    <location>
        <position position="85"/>
    </location>
    <ligand>
        <name>FMN</name>
        <dbReference type="ChEBI" id="CHEBI:58210"/>
    </ligand>
</feature>
<feature type="binding site" evidence="1">
    <location>
        <begin position="110"/>
        <end position="114"/>
    </location>
    <ligand>
        <name>substrate</name>
    </ligand>
</feature>
<feature type="binding site" evidence="1">
    <location>
        <position position="139"/>
    </location>
    <ligand>
        <name>FMN</name>
        <dbReference type="ChEBI" id="CHEBI:58210"/>
    </ligand>
</feature>
<feature type="binding site" evidence="1">
    <location>
        <position position="170"/>
    </location>
    <ligand>
        <name>FMN</name>
        <dbReference type="ChEBI" id="CHEBI:58210"/>
    </ligand>
</feature>
<feature type="binding site" evidence="1">
    <location>
        <position position="170"/>
    </location>
    <ligand>
        <name>substrate</name>
    </ligand>
</feature>
<feature type="binding site" evidence="1">
    <location>
        <position position="175"/>
    </location>
    <ligand>
        <name>substrate</name>
    </ligand>
</feature>
<feature type="binding site" evidence="1">
    <location>
        <position position="215"/>
    </location>
    <ligand>
        <name>FMN</name>
        <dbReference type="ChEBI" id="CHEBI:58210"/>
    </ligand>
</feature>
<feature type="binding site" evidence="1">
    <location>
        <position position="243"/>
    </location>
    <ligand>
        <name>FMN</name>
        <dbReference type="ChEBI" id="CHEBI:58210"/>
    </ligand>
</feature>
<feature type="binding site" evidence="1">
    <location>
        <begin position="244"/>
        <end position="245"/>
    </location>
    <ligand>
        <name>substrate</name>
    </ligand>
</feature>
<feature type="binding site" evidence="1">
    <location>
        <position position="266"/>
    </location>
    <ligand>
        <name>FMN</name>
        <dbReference type="ChEBI" id="CHEBI:58210"/>
    </ligand>
</feature>
<feature type="binding site" evidence="1">
    <location>
        <position position="295"/>
    </location>
    <ligand>
        <name>FMN</name>
        <dbReference type="ChEBI" id="CHEBI:58210"/>
    </ligand>
</feature>
<feature type="binding site" evidence="1">
    <location>
        <begin position="316"/>
        <end position="317"/>
    </location>
    <ligand>
        <name>FMN</name>
        <dbReference type="ChEBI" id="CHEBI:58210"/>
    </ligand>
</feature>
<gene>
    <name evidence="1" type="primary">pyrD</name>
    <name type="ordered locus">BR0311</name>
    <name type="ordered locus">BS1330_I0312</name>
</gene>
<name>PYRD_BRUSU</name>
<sequence>MSGLFETLGRRALFTFDAEQAHGLSITGLKTGIVTCRTPEDPALSVKVAGLKFPNPLGMAAGYDKNAEVPDALLKLGFGFAEVGTLTPRPQSGNPRPRIFRLVDDKAVINRLGFNNEGHEAAFKRLSRRAGKSGIVGVNIGANKDAEDRIADYVAGIRRFYQLARYFTVNISSPNTPGLRNLQAREALHELLSRVLEARDEEGNMCTLKRPVFLKIAPDLTDEELDDIAAEADAQKLDGIIVSNTTLSRSGLKNPENSNETGGLSGAPLFERSTVVLARMRERVGPDMPLIGVGGIDSAETALAKIKAGADLVQLYTGLIYRGPGLPGEILRGLSTAIKHEGVSSIAELRDRDTKEWAARKLIS</sequence>
<dbReference type="EC" id="1.3.5.2" evidence="1"/>
<dbReference type="EMBL" id="AE014291">
    <property type="protein sequence ID" value="AAN29260.1"/>
    <property type="molecule type" value="Genomic_DNA"/>
</dbReference>
<dbReference type="EMBL" id="CP002997">
    <property type="protein sequence ID" value="AEM17673.1"/>
    <property type="molecule type" value="Genomic_DNA"/>
</dbReference>
<dbReference type="RefSeq" id="WP_004687981.1">
    <property type="nucleotide sequence ID" value="NZ_KN046804.1"/>
</dbReference>
<dbReference type="SMR" id="Q8G2K8"/>
<dbReference type="KEGG" id="bms:BR0311"/>
<dbReference type="KEGG" id="bsi:BS1330_I0312"/>
<dbReference type="PATRIC" id="fig|204722.21.peg.1799"/>
<dbReference type="HOGENOM" id="CLU_013640_2_1_5"/>
<dbReference type="PhylomeDB" id="Q8G2K8"/>
<dbReference type="UniPathway" id="UPA00070">
    <property type="reaction ID" value="UER00946"/>
</dbReference>
<dbReference type="PRO" id="PR:Q8G2K8"/>
<dbReference type="Proteomes" id="UP000007104">
    <property type="component" value="Chromosome I"/>
</dbReference>
<dbReference type="GO" id="GO:0005737">
    <property type="term" value="C:cytoplasm"/>
    <property type="evidence" value="ECO:0007669"/>
    <property type="project" value="InterPro"/>
</dbReference>
<dbReference type="GO" id="GO:0005886">
    <property type="term" value="C:plasma membrane"/>
    <property type="evidence" value="ECO:0007669"/>
    <property type="project" value="UniProtKB-SubCell"/>
</dbReference>
<dbReference type="GO" id="GO:0106430">
    <property type="term" value="F:dihydroorotate dehydrogenase (quinone) activity"/>
    <property type="evidence" value="ECO:0007669"/>
    <property type="project" value="UniProtKB-EC"/>
</dbReference>
<dbReference type="GO" id="GO:0006207">
    <property type="term" value="P:'de novo' pyrimidine nucleobase biosynthetic process"/>
    <property type="evidence" value="ECO:0007669"/>
    <property type="project" value="InterPro"/>
</dbReference>
<dbReference type="GO" id="GO:0044205">
    <property type="term" value="P:'de novo' UMP biosynthetic process"/>
    <property type="evidence" value="ECO:0007669"/>
    <property type="project" value="UniProtKB-UniRule"/>
</dbReference>
<dbReference type="CDD" id="cd04738">
    <property type="entry name" value="DHOD_2_like"/>
    <property type="match status" value="1"/>
</dbReference>
<dbReference type="Gene3D" id="3.20.20.70">
    <property type="entry name" value="Aldolase class I"/>
    <property type="match status" value="1"/>
</dbReference>
<dbReference type="HAMAP" id="MF_00225">
    <property type="entry name" value="DHO_dh_type2"/>
    <property type="match status" value="1"/>
</dbReference>
<dbReference type="InterPro" id="IPR013785">
    <property type="entry name" value="Aldolase_TIM"/>
</dbReference>
<dbReference type="InterPro" id="IPR050074">
    <property type="entry name" value="DHO_dehydrogenase"/>
</dbReference>
<dbReference type="InterPro" id="IPR005719">
    <property type="entry name" value="Dihydroorotate_DH_2"/>
</dbReference>
<dbReference type="InterPro" id="IPR005720">
    <property type="entry name" value="Dihydroorotate_DH_cat"/>
</dbReference>
<dbReference type="InterPro" id="IPR001295">
    <property type="entry name" value="Dihydroorotate_DH_CS"/>
</dbReference>
<dbReference type="NCBIfam" id="NF003645">
    <property type="entry name" value="PRK05286.1-2"/>
    <property type="match status" value="1"/>
</dbReference>
<dbReference type="NCBIfam" id="NF003652">
    <property type="entry name" value="PRK05286.2-5"/>
    <property type="match status" value="1"/>
</dbReference>
<dbReference type="NCBIfam" id="TIGR01036">
    <property type="entry name" value="pyrD_sub2"/>
    <property type="match status" value="1"/>
</dbReference>
<dbReference type="PANTHER" id="PTHR48109:SF4">
    <property type="entry name" value="DIHYDROOROTATE DEHYDROGENASE (QUINONE), MITOCHONDRIAL"/>
    <property type="match status" value="1"/>
</dbReference>
<dbReference type="PANTHER" id="PTHR48109">
    <property type="entry name" value="DIHYDROOROTATE DEHYDROGENASE (QUINONE), MITOCHONDRIAL-RELATED"/>
    <property type="match status" value="1"/>
</dbReference>
<dbReference type="Pfam" id="PF01180">
    <property type="entry name" value="DHO_dh"/>
    <property type="match status" value="1"/>
</dbReference>
<dbReference type="SUPFAM" id="SSF51395">
    <property type="entry name" value="FMN-linked oxidoreductases"/>
    <property type="match status" value="1"/>
</dbReference>
<dbReference type="PROSITE" id="PS00911">
    <property type="entry name" value="DHODEHASE_1"/>
    <property type="match status" value="1"/>
</dbReference>
<dbReference type="PROSITE" id="PS00912">
    <property type="entry name" value="DHODEHASE_2"/>
    <property type="match status" value="1"/>
</dbReference>
<organism>
    <name type="scientific">Brucella suis biovar 1 (strain 1330)</name>
    <dbReference type="NCBI Taxonomy" id="204722"/>
    <lineage>
        <taxon>Bacteria</taxon>
        <taxon>Pseudomonadati</taxon>
        <taxon>Pseudomonadota</taxon>
        <taxon>Alphaproteobacteria</taxon>
        <taxon>Hyphomicrobiales</taxon>
        <taxon>Brucellaceae</taxon>
        <taxon>Brucella/Ochrobactrum group</taxon>
        <taxon>Brucella</taxon>
    </lineage>
</organism>
<keyword id="KW-1003">Cell membrane</keyword>
<keyword id="KW-0285">Flavoprotein</keyword>
<keyword id="KW-0288">FMN</keyword>
<keyword id="KW-0472">Membrane</keyword>
<keyword id="KW-0560">Oxidoreductase</keyword>
<keyword id="KW-0665">Pyrimidine biosynthesis</keyword>
<proteinExistence type="inferred from homology"/>